<protein>
    <recommendedName>
        <fullName>APO protein 2, chloroplastic</fullName>
    </recommendedName>
    <alternativeName>
        <fullName>Accumulation of photosystem I protein 2</fullName>
    </alternativeName>
    <alternativeName>
        <fullName>Protein EMBRYO DEFECTIVE 1629</fullName>
    </alternativeName>
</protein>
<gene>
    <name type="primary">APO2</name>
    <name type="synonym">EMB1629</name>
    <name type="ordered locus">At5g57930</name>
    <name type="ORF">MTI20.19</name>
</gene>
<name>APO2_ARATH</name>
<proteinExistence type="evidence at transcript level"/>
<comment type="function">
    <text evidence="1">May be involved in the stable assembly of several 4Fe-4S cluster-containing complexes of chloroplasts.</text>
</comment>
<comment type="subcellular location">
    <subcellularLocation>
        <location evidence="5">Plastid</location>
        <location evidence="5">Chloroplast</location>
    </subcellularLocation>
</comment>
<comment type="alternative products">
    <event type="alternative splicing"/>
    <isoform>
        <id>Q8W4A5-1</id>
        <name>1</name>
        <sequence type="displayed"/>
    </isoform>
    <isoform>
        <id>Q8W4A5-2</id>
        <name>2</name>
        <sequence type="described" ref="VSP_014479"/>
    </isoform>
</comment>
<comment type="domain">
    <text evidence="5">The APO repeats may provide ligands for 4Fe-4S centers.</text>
</comment>
<comment type="similarity">
    <text evidence="3">Belongs to the APO family.</text>
</comment>
<comment type="sequence caution" evidence="5">
    <conflict type="erroneous gene model prediction">
        <sequence resource="EMBL-CDS" id="BAB08863"/>
    </conflict>
</comment>
<dbReference type="EMBL" id="AB013396">
    <property type="protein sequence ID" value="BAB08863.1"/>
    <property type="status" value="ALT_SEQ"/>
    <property type="molecule type" value="Genomic_DNA"/>
</dbReference>
<dbReference type="EMBL" id="CP002688">
    <property type="protein sequence ID" value="AED96972.1"/>
    <property type="molecule type" value="Genomic_DNA"/>
</dbReference>
<dbReference type="EMBL" id="CP002688">
    <property type="protein sequence ID" value="AED96973.1"/>
    <property type="molecule type" value="Genomic_DNA"/>
</dbReference>
<dbReference type="EMBL" id="AF375421">
    <property type="protein sequence ID" value="AAK53005.1"/>
    <property type="molecule type" value="mRNA"/>
</dbReference>
<dbReference type="EMBL" id="AY062701">
    <property type="protein sequence ID" value="AAL32779.1"/>
    <property type="molecule type" value="mRNA"/>
</dbReference>
<dbReference type="EMBL" id="AY114672">
    <property type="protein sequence ID" value="AAM47991.1"/>
    <property type="molecule type" value="mRNA"/>
</dbReference>
<dbReference type="RefSeq" id="NP_200601.3">
    <molecule id="Q8W4A5-2"/>
    <property type="nucleotide sequence ID" value="NM_125178.6"/>
</dbReference>
<dbReference type="RefSeq" id="NP_851208.1">
    <molecule id="Q8W4A5-1"/>
    <property type="nucleotide sequence ID" value="NM_180877.2"/>
</dbReference>
<dbReference type="SMR" id="Q8W4A5"/>
<dbReference type="FunCoup" id="Q8W4A5">
    <property type="interactions" value="2359"/>
</dbReference>
<dbReference type="STRING" id="3702.Q8W4A5"/>
<dbReference type="PaxDb" id="3702-AT5G57930.2"/>
<dbReference type="ProteomicsDB" id="246778">
    <molecule id="Q8W4A5-1"/>
</dbReference>
<dbReference type="EnsemblPlants" id="AT5G57930.1">
    <molecule id="Q8W4A5-1"/>
    <property type="protein sequence ID" value="AT5G57930.1"/>
    <property type="gene ID" value="AT5G57930"/>
</dbReference>
<dbReference type="EnsemblPlants" id="AT5G57930.2">
    <molecule id="Q8W4A5-2"/>
    <property type="protein sequence ID" value="AT5G57930.2"/>
    <property type="gene ID" value="AT5G57930"/>
</dbReference>
<dbReference type="GeneID" id="835904"/>
<dbReference type="Gramene" id="AT5G57930.1">
    <molecule id="Q8W4A5-1"/>
    <property type="protein sequence ID" value="AT5G57930.1"/>
    <property type="gene ID" value="AT5G57930"/>
</dbReference>
<dbReference type="Gramene" id="AT5G57930.2">
    <molecule id="Q8W4A5-2"/>
    <property type="protein sequence ID" value="AT5G57930.2"/>
    <property type="gene ID" value="AT5G57930"/>
</dbReference>
<dbReference type="KEGG" id="ath:AT5G57930"/>
<dbReference type="Araport" id="AT5G57930"/>
<dbReference type="TAIR" id="AT5G57930">
    <property type="gene designation" value="APO2"/>
</dbReference>
<dbReference type="eggNOG" id="ENOG502QPNK">
    <property type="taxonomic scope" value="Eukaryota"/>
</dbReference>
<dbReference type="HOGENOM" id="CLU_033199_0_1_1"/>
<dbReference type="InParanoid" id="Q8W4A5"/>
<dbReference type="OMA" id="EQYKSTM"/>
<dbReference type="OrthoDB" id="1926485at2759"/>
<dbReference type="PhylomeDB" id="Q8W4A5"/>
<dbReference type="PRO" id="PR:Q8W4A5"/>
<dbReference type="Proteomes" id="UP000006548">
    <property type="component" value="Chromosome 5"/>
</dbReference>
<dbReference type="ExpressionAtlas" id="Q8W4A5">
    <property type="expression patterns" value="baseline and differential"/>
</dbReference>
<dbReference type="GO" id="GO:0009507">
    <property type="term" value="C:chloroplast"/>
    <property type="evidence" value="ECO:0007669"/>
    <property type="project" value="UniProtKB-SubCell"/>
</dbReference>
<dbReference type="GO" id="GO:0003723">
    <property type="term" value="F:RNA binding"/>
    <property type="evidence" value="ECO:0007669"/>
    <property type="project" value="InterPro"/>
</dbReference>
<dbReference type="InterPro" id="IPR023342">
    <property type="entry name" value="APO_dom"/>
</dbReference>
<dbReference type="PANTHER" id="PTHR10388">
    <property type="entry name" value="EUKARYOTIC TRANSLATION INITIATION FACTOR SUI1"/>
    <property type="match status" value="1"/>
</dbReference>
<dbReference type="Pfam" id="PF05634">
    <property type="entry name" value="APO_RNA-bind"/>
    <property type="match status" value="2"/>
</dbReference>
<dbReference type="PROSITE" id="PS51499">
    <property type="entry name" value="APO"/>
    <property type="match status" value="2"/>
</dbReference>
<accession>Q8W4A5</accession>
<accession>Q94JR8</accession>
<accession>Q9FJM2</accession>
<evidence type="ECO:0000250" key="1"/>
<evidence type="ECO:0000255" key="2"/>
<evidence type="ECO:0000255" key="3">
    <source>
        <dbReference type="PROSITE-ProRule" id="PRU00832"/>
    </source>
</evidence>
<evidence type="ECO:0000256" key="4">
    <source>
        <dbReference type="SAM" id="MobiDB-lite"/>
    </source>
</evidence>
<evidence type="ECO:0000305" key="5"/>
<keyword id="KW-0025">Alternative splicing</keyword>
<keyword id="KW-0150">Chloroplast</keyword>
<keyword id="KW-0934">Plastid</keyword>
<keyword id="KW-1185">Reference proteome</keyword>
<keyword id="KW-0677">Repeat</keyword>
<keyword id="KW-0809">Transit peptide</keyword>
<organism>
    <name type="scientific">Arabidopsis thaliana</name>
    <name type="common">Mouse-ear cress</name>
    <dbReference type="NCBI Taxonomy" id="3702"/>
    <lineage>
        <taxon>Eukaryota</taxon>
        <taxon>Viridiplantae</taxon>
        <taxon>Streptophyta</taxon>
        <taxon>Embryophyta</taxon>
        <taxon>Tracheophyta</taxon>
        <taxon>Spermatophyta</taxon>
        <taxon>Magnoliopsida</taxon>
        <taxon>eudicotyledons</taxon>
        <taxon>Gunneridae</taxon>
        <taxon>Pentapetalae</taxon>
        <taxon>rosids</taxon>
        <taxon>malvids</taxon>
        <taxon>Brassicales</taxon>
        <taxon>Brassicaceae</taxon>
        <taxon>Camelineae</taxon>
        <taxon>Arabidopsis</taxon>
    </lineage>
</organism>
<sequence length="440" mass="49938">MSITYSAISFSGFSPKSVPFAIHSVTRRQFLNPNTFYRFGFSPSLQGSSIEFSLQLNSRVVLSKERRSLPLVVRNDRPQNEDLPKQYTRREKKPFPVPIVDLRRAARERVKNNKDKPKRPLPPPKNGMVVKSLVPLAYKVYNARIRLINNLHRLMKVVRVNACGWCNEIHVGPYGHPFKSCKGPNTSQRKGLHEWTNSVIEDVIVPLEAYHLFDRLGKRIRHDERFSIPRVPAVVELCIQGGVEIPEFPAKRRRKPIIRIGKSEFVDADETELPDPEPQPPPVPLLTELPVSEITPPSSEEETVSLAEETLQAWEEMRAGAKKLMRMYRVRVCGYCPEVHVGPTGHKAQNCGAFKHQQRNGQHGWQSAVLDDLIPPRYVWHVPDVNGPPMQRELRSFYGQAPAVVEICAQAGAVVPEHYRATMRLEVGIPSSVKEAEMVV</sequence>
<feature type="transit peptide" description="Chloroplast" evidence="2">
    <location>
        <begin position="1"/>
        <end position="62"/>
    </location>
</feature>
<feature type="chain" id="PRO_0000001931" description="APO protein 2, chloroplastic">
    <location>
        <begin position="63"/>
        <end position="440"/>
    </location>
</feature>
<feature type="domain" description="APO 1" evidence="3">
    <location>
        <begin position="162"/>
        <end position="247"/>
    </location>
</feature>
<feature type="domain" description="APO 2" evidence="3">
    <location>
        <begin position="332"/>
        <end position="417"/>
    </location>
</feature>
<feature type="region of interest" description="Disordered" evidence="4">
    <location>
        <begin position="106"/>
        <end position="126"/>
    </location>
</feature>
<feature type="compositionally biased region" description="Basic and acidic residues" evidence="4">
    <location>
        <begin position="106"/>
        <end position="115"/>
    </location>
</feature>
<feature type="splice variant" id="VSP_014479" description="In isoform 2." evidence="5">
    <original>SF</original>
    <variation>SSSTV</variation>
    <location>
        <begin position="9"/>
        <end position="10"/>
    </location>
</feature>
<reference key="1">
    <citation type="journal article" date="1998" name="DNA Res.">
        <title>Structural analysis of Arabidopsis thaliana chromosome 5. VI. Sequence features of the regions of 1,367,185 bp covered by 19 physically assigned P1 and TAC clones.</title>
        <authorList>
            <person name="Kotani H."/>
            <person name="Nakamura Y."/>
            <person name="Sato S."/>
            <person name="Asamizu E."/>
            <person name="Kaneko T."/>
            <person name="Miyajima N."/>
            <person name="Tabata S."/>
        </authorList>
    </citation>
    <scope>NUCLEOTIDE SEQUENCE [LARGE SCALE GENOMIC DNA]</scope>
    <source>
        <strain>cv. Columbia</strain>
    </source>
</reference>
<reference key="2">
    <citation type="journal article" date="2017" name="Plant J.">
        <title>Araport11: a complete reannotation of the Arabidopsis thaliana reference genome.</title>
        <authorList>
            <person name="Cheng C.Y."/>
            <person name="Krishnakumar V."/>
            <person name="Chan A.P."/>
            <person name="Thibaud-Nissen F."/>
            <person name="Schobel S."/>
            <person name="Town C.D."/>
        </authorList>
    </citation>
    <scope>GENOME REANNOTATION</scope>
    <source>
        <strain>cv. Columbia</strain>
    </source>
</reference>
<reference key="3">
    <citation type="journal article" date="2003" name="Science">
        <title>Empirical analysis of transcriptional activity in the Arabidopsis genome.</title>
        <authorList>
            <person name="Yamada K."/>
            <person name="Lim J."/>
            <person name="Dale J.M."/>
            <person name="Chen H."/>
            <person name="Shinn P."/>
            <person name="Palm C.J."/>
            <person name="Southwick A.M."/>
            <person name="Wu H.C."/>
            <person name="Kim C.J."/>
            <person name="Nguyen M."/>
            <person name="Pham P.K."/>
            <person name="Cheuk R.F."/>
            <person name="Karlin-Newmann G."/>
            <person name="Liu S.X."/>
            <person name="Lam B."/>
            <person name="Sakano H."/>
            <person name="Wu T."/>
            <person name="Yu G."/>
            <person name="Miranda M."/>
            <person name="Quach H.L."/>
            <person name="Tripp M."/>
            <person name="Chang C.H."/>
            <person name="Lee J.M."/>
            <person name="Toriumi M.J."/>
            <person name="Chan M.M."/>
            <person name="Tang C.C."/>
            <person name="Onodera C.S."/>
            <person name="Deng J.M."/>
            <person name="Akiyama K."/>
            <person name="Ansari Y."/>
            <person name="Arakawa T."/>
            <person name="Banh J."/>
            <person name="Banno F."/>
            <person name="Bowser L."/>
            <person name="Brooks S.Y."/>
            <person name="Carninci P."/>
            <person name="Chao Q."/>
            <person name="Choy N."/>
            <person name="Enju A."/>
            <person name="Goldsmith A.D."/>
            <person name="Gurjal M."/>
            <person name="Hansen N.F."/>
            <person name="Hayashizaki Y."/>
            <person name="Johnson-Hopson C."/>
            <person name="Hsuan V.W."/>
            <person name="Iida K."/>
            <person name="Karnes M."/>
            <person name="Khan S."/>
            <person name="Koesema E."/>
            <person name="Ishida J."/>
            <person name="Jiang P.X."/>
            <person name="Jones T."/>
            <person name="Kawai J."/>
            <person name="Kamiya A."/>
            <person name="Meyers C."/>
            <person name="Nakajima M."/>
            <person name="Narusaka M."/>
            <person name="Seki M."/>
            <person name="Sakurai T."/>
            <person name="Satou M."/>
            <person name="Tamse R."/>
            <person name="Vaysberg M."/>
            <person name="Wallender E.K."/>
            <person name="Wong C."/>
            <person name="Yamamura Y."/>
            <person name="Yuan S."/>
            <person name="Shinozaki K."/>
            <person name="Davis R.W."/>
            <person name="Theologis A."/>
            <person name="Ecker J.R."/>
        </authorList>
    </citation>
    <scope>NUCLEOTIDE SEQUENCE [LARGE SCALE MRNA] (ISOFORM 1)</scope>
    <scope>NUCLEOTIDE SEQUENCE OF 1-250 (ISOFORM 2)</scope>
    <source>
        <strain>cv. Columbia</strain>
    </source>
</reference>